<comment type="function">
    <text evidence="1">Intermediate capsid protein that self assembles to form an icosahedral capsid with a T=13 symmetry, which consists of 230 trimers of VP6, with channels at each of its five-fold vertices. This capsid constitutes the middle concentric layer of the viral mature particle. The innermost VP2 capsid and the intermediate VP6 capsid remain intact following cell entry to protect the dsRNA from degradation and to prevent unfavorable antiviral responses in the host cell during all the replication cycle of the virus. Nascent transcripts are transcribed within the structural confines of this double-layered particle (DLP) and are extruded through the channels at the five-fold axes. VP6 is required for the transcription activity of the DLP.</text>
</comment>
<comment type="subunit">
    <text evidence="1">Homotrimer. Interacts with the inner capsid protein VP2. Interacts with the outer capsid glycoprotein VP7. Interacts with the outer capsid protein VP5*.</text>
</comment>
<comment type="subcellular location">
    <subcellularLocation>
        <location evidence="1">Virion</location>
    </subcellularLocation>
    <text evidence="1">Component of the intermediate capsid. Also found in spherical cytoplasmic structures, called virus factories, that appear early after infection and are the site of viral replication and packaging.</text>
</comment>
<comment type="PTM">
    <text evidence="1">The N-terminus is blocked.</text>
</comment>
<comment type="PTM">
    <text evidence="1">Sumoylated with SUMO1 and SUMO2. Sumoylation of viral proteins seems to have a positive role on viral replication.</text>
</comment>
<comment type="miscellaneous">
    <text evidence="1">The VP6 trimer contains a zinc ion located at the center of the molecule. The zinc ion is not essential for either trimerization or transcription activity of the DLP. Zinc-depleted VP6 has an increased sensitivity to proteases.</text>
</comment>
<comment type="similarity">
    <text evidence="1">Belongs to the rotavirus VP6 family.</text>
</comment>
<dbReference type="EMBL" id="D82980">
    <property type="protein sequence ID" value="BAA11668.1"/>
    <property type="molecule type" value="Genomic_RNA"/>
</dbReference>
<dbReference type="EMBL" id="X98871">
    <property type="protein sequence ID" value="CAD88598.1"/>
    <property type="molecule type" value="mRNA"/>
</dbReference>
<dbReference type="SMR" id="Q86341"/>
<dbReference type="GO" id="GO:0019031">
    <property type="term" value="C:viral envelope"/>
    <property type="evidence" value="ECO:0007669"/>
    <property type="project" value="UniProtKB-UniRule"/>
</dbReference>
<dbReference type="GO" id="GO:0039626">
    <property type="term" value="C:viral intermediate capsid"/>
    <property type="evidence" value="ECO:0007669"/>
    <property type="project" value="UniProtKB-UniRule"/>
</dbReference>
<dbReference type="GO" id="GO:0046789">
    <property type="term" value="F:host cell surface receptor binding"/>
    <property type="evidence" value="ECO:0007669"/>
    <property type="project" value="UniProtKB-UniRule"/>
</dbReference>
<dbReference type="GO" id="GO:0046872">
    <property type="term" value="F:metal ion binding"/>
    <property type="evidence" value="ECO:0007669"/>
    <property type="project" value="UniProtKB-UniRule"/>
</dbReference>
<dbReference type="GO" id="GO:0005198">
    <property type="term" value="F:structural molecule activity"/>
    <property type="evidence" value="ECO:0007669"/>
    <property type="project" value="UniProtKB-UniRule"/>
</dbReference>
<dbReference type="GO" id="GO:0019064">
    <property type="term" value="P:fusion of virus membrane with host plasma membrane"/>
    <property type="evidence" value="ECO:0007669"/>
    <property type="project" value="UniProtKB-UniRule"/>
</dbReference>
<dbReference type="Gene3D" id="2.60.120.170">
    <property type="match status" value="1"/>
</dbReference>
<dbReference type="Gene3D" id="1.10.1350.10">
    <property type="entry name" value="Viral capsid alpha domain"/>
    <property type="match status" value="1"/>
</dbReference>
<dbReference type="HAMAP" id="MF_04126">
    <property type="entry name" value="Rota_VP6"/>
    <property type="match status" value="1"/>
</dbReference>
<dbReference type="HAMAP" id="MF_04129">
    <property type="entry name" value="Rota_VP6_A"/>
    <property type="match status" value="1"/>
</dbReference>
<dbReference type="InterPro" id="IPR008980">
    <property type="entry name" value="Capsid_hemagglutn"/>
</dbReference>
<dbReference type="InterPro" id="IPR001385">
    <property type="entry name" value="Rotavirus_A/C_VP6"/>
</dbReference>
<dbReference type="InterPro" id="IPR008935">
    <property type="entry name" value="Virus_capsid_a-hlx_vir"/>
</dbReference>
<dbReference type="Pfam" id="PF00980">
    <property type="entry name" value="Rota_Capsid_VP6"/>
    <property type="match status" value="1"/>
</dbReference>
<dbReference type="SUPFAM" id="SSF48345">
    <property type="entry name" value="A virus capsid protein alpha-helical domain"/>
    <property type="match status" value="1"/>
</dbReference>
<dbReference type="SUPFAM" id="SSF49818">
    <property type="entry name" value="Viral protein domain"/>
    <property type="match status" value="1"/>
</dbReference>
<accession>Q86341</accession>
<accession>Q80GJ6</accession>
<feature type="chain" id="PRO_0000368185" description="Intermediate capsid protein VP6">
    <location>
        <begin position="1"/>
        <end position="397"/>
    </location>
</feature>
<feature type="region of interest" description="Interaction with the inner capsid protein VP2" evidence="1">
    <location>
        <begin position="62"/>
        <end position="73"/>
    </location>
</feature>
<feature type="binding site" evidence="1">
    <location>
        <position position="153"/>
    </location>
    <ligand>
        <name>Zn(2+)</name>
        <dbReference type="ChEBI" id="CHEBI:29105"/>
        <note>ligand shared between all trimeric partners</note>
    </ligand>
</feature>
<feature type="binding site" evidence="1">
    <location>
        <position position="266"/>
    </location>
    <ligand>
        <name>Ca(2+)</name>
        <dbReference type="ChEBI" id="CHEBI:29108"/>
    </ligand>
</feature>
<feature type="binding site" evidence="1">
    <location>
        <position position="286"/>
    </location>
    <ligand>
        <name>Ca(2+)</name>
        <dbReference type="ChEBI" id="CHEBI:29108"/>
    </ligand>
</feature>
<proteinExistence type="evidence at transcript level"/>
<sequence>MDVLYSLAKTLKDARARIVEGTLYTNVADIVQQVNQVINSINGSTFQTGGIGNLPIRNWTFDFGTLGTTLLNLDANYVENARTTIDYFIDFVDSVCVDEIVRESQRNGIAPQSDSLRQLSNAKYKRINYDNESEYIENWNLQNRRQRTGYLLHKPNILPYNNSFTLTRSQPAHDNVCGTIWLNNGSEIEIAGFDSECALNAPGNIQEFEHVVPMRRVLNNATVSLLPYAPRLTQRAVIPTADGLNTWLFNPIILRPNNVQVEFLLNGQVITNYQARYGILAARNFDSIRISFQLVRPPNMTPGVAALFPVAAPFPNHATVGLTLKIESASCESVLSDANEPYLSIVTGLRQEYAIPVGPVFPAGMNWTELLNNYSASREDNLQRIFTAASIRSMIIK</sequence>
<protein>
    <recommendedName>
        <fullName evidence="1">Intermediate capsid protein VP6</fullName>
    </recommendedName>
</protein>
<evidence type="ECO:0000255" key="1">
    <source>
        <dbReference type="HAMAP-Rule" id="MF_04129"/>
    </source>
</evidence>
<organism>
    <name type="scientific">Rotavirus A (strain RVA/Turkey/Ireland/Ty-1/1978/G7P[17])</name>
    <name type="common">RV-A</name>
    <dbReference type="NCBI Taxonomy" id="12584"/>
    <lineage>
        <taxon>Viruses</taxon>
        <taxon>Riboviria</taxon>
        <taxon>Orthornavirae</taxon>
        <taxon>Duplornaviricota</taxon>
        <taxon>Resentoviricetes</taxon>
        <taxon>Reovirales</taxon>
        <taxon>Sedoreoviridae</taxon>
        <taxon>Rotavirus</taxon>
        <taxon>Rotavirus A</taxon>
    </lineage>
</organism>
<name>VP6_ROTA1</name>
<reference key="1">
    <citation type="journal article" date="1997" name="Virus Res.">
        <title>Sequence analysis of the VP6 gene in group A turkey and chicken rotaviruses.</title>
        <authorList>
            <person name="Ito H."/>
            <person name="Minamoto N."/>
            <person name="Hiraga S."/>
            <person name="Sugiyama M."/>
        </authorList>
    </citation>
    <scope>NUCLEOTIDE SEQUENCE [GENOMIC RNA]</scope>
</reference>
<reference key="2">
    <citation type="submission" date="1996-06" db="EMBL/GenBank/DDBJ databases">
        <authorList>
            <person name="Rohwedder A."/>
            <person name="Hotop H."/>
            <person name="Bruessow H."/>
        </authorList>
    </citation>
    <scope>NUCLEOTIDE SEQUENCE [MRNA]</scope>
</reference>
<organismHost>
    <name type="scientific">Aves</name>
    <dbReference type="NCBI Taxonomy" id="8782"/>
</organismHost>
<keyword id="KW-0106">Calcium</keyword>
<keyword id="KW-0167">Capsid protein</keyword>
<keyword id="KW-1154">Intermediate capsid protein</keyword>
<keyword id="KW-0479">Metal-binding</keyword>
<keyword id="KW-0832">Ubl conjugation</keyword>
<keyword id="KW-0946">Virion</keyword>
<keyword id="KW-0862">Zinc</keyword>